<feature type="chain" id="PRO_0000115208" description="DNA mismatch repair protein Msh6">
    <location>
        <begin position="1"/>
        <end position="1358"/>
    </location>
</feature>
<feature type="domain" description="PWWP" evidence="3">
    <location>
        <begin position="92"/>
        <end position="154"/>
    </location>
</feature>
<feature type="region of interest" description="Disordered" evidence="4">
    <location>
        <begin position="1"/>
        <end position="87"/>
    </location>
</feature>
<feature type="region of interest" description="Disordered" evidence="4">
    <location>
        <begin position="197"/>
        <end position="360"/>
    </location>
</feature>
<feature type="compositionally biased region" description="Low complexity" evidence="4">
    <location>
        <begin position="25"/>
        <end position="46"/>
    </location>
</feature>
<feature type="compositionally biased region" description="Low complexity" evidence="4">
    <location>
        <begin position="76"/>
        <end position="87"/>
    </location>
</feature>
<feature type="compositionally biased region" description="Acidic residues" evidence="4">
    <location>
        <begin position="198"/>
        <end position="209"/>
    </location>
</feature>
<feature type="compositionally biased region" description="Acidic residues" evidence="4">
    <location>
        <begin position="219"/>
        <end position="231"/>
    </location>
</feature>
<feature type="compositionally biased region" description="Basic residues" evidence="4">
    <location>
        <begin position="240"/>
        <end position="249"/>
    </location>
</feature>
<feature type="compositionally biased region" description="Basic and acidic residues" evidence="4">
    <location>
        <begin position="263"/>
        <end position="273"/>
    </location>
</feature>
<feature type="compositionally biased region" description="Polar residues" evidence="4">
    <location>
        <begin position="329"/>
        <end position="351"/>
    </location>
</feature>
<feature type="binding site" evidence="2">
    <location>
        <begin position="1132"/>
        <end position="1139"/>
    </location>
    <ligand>
        <name>ATP</name>
        <dbReference type="ChEBI" id="CHEBI:30616"/>
    </ligand>
</feature>
<feature type="modified residue" description="Phosphoserine" evidence="1">
    <location>
        <position position="14"/>
    </location>
</feature>
<feature type="modified residue" description="Phosphoserine" evidence="1">
    <location>
        <position position="38"/>
    </location>
</feature>
<feature type="modified residue" description="Phosphoserine" evidence="1">
    <location>
        <position position="40"/>
    </location>
</feature>
<feature type="modified residue" description="N6-acetyllysine" evidence="1">
    <location>
        <position position="67"/>
    </location>
</feature>
<feature type="modified residue" description="Phosphoserine" evidence="1">
    <location>
        <position position="91"/>
    </location>
</feature>
<feature type="modified residue" description="Phosphoserine" evidence="10">
    <location>
        <position position="137"/>
    </location>
</feature>
<feature type="modified residue" description="Phosphoserine" evidence="1">
    <location>
        <position position="200"/>
    </location>
</feature>
<feature type="modified residue" description="Phosphoserine" evidence="1">
    <location>
        <position position="219"/>
    </location>
</feature>
<feature type="modified residue" description="Phosphoserine" evidence="1">
    <location>
        <position position="227"/>
    </location>
</feature>
<feature type="modified residue" description="Phosphoserine" evidence="10">
    <location>
        <position position="252"/>
    </location>
</feature>
<feature type="modified residue" description="Phosphoserine" evidence="10">
    <location>
        <position position="254"/>
    </location>
</feature>
<feature type="modified residue" description="Phosphoserine" evidence="10">
    <location>
        <position position="256"/>
    </location>
</feature>
<feature type="modified residue" description="Phosphoserine" evidence="9 10">
    <location>
        <position position="261"/>
    </location>
</feature>
<feature type="modified residue" description="Phosphothreonine" evidence="1">
    <location>
        <position position="269"/>
    </location>
</feature>
<feature type="modified residue" description="Phosphoserine" evidence="1">
    <location>
        <position position="274"/>
    </location>
</feature>
<feature type="modified residue" description="Phosphoserine" evidence="1">
    <location>
        <position position="275"/>
    </location>
</feature>
<feature type="modified residue" description="Phosphoserine" evidence="1">
    <location>
        <position position="279"/>
    </location>
</feature>
<feature type="modified residue" description="Phosphoserine" evidence="1">
    <location>
        <position position="280"/>
    </location>
</feature>
<feature type="modified residue" description="Phosphothreonine" evidence="1">
    <location>
        <position position="487"/>
    </location>
</feature>
<feature type="modified residue" description="N6-acetyllysine" evidence="1">
    <location>
        <position position="503"/>
    </location>
</feature>
<feature type="modified residue" description="Phosphoserine" evidence="1">
    <location>
        <position position="827"/>
    </location>
</feature>
<feature type="modified residue" description="Phosphoserine" evidence="1">
    <location>
        <position position="932"/>
    </location>
</feature>
<feature type="modified residue" description="Phosphothreonine" evidence="1">
    <location>
        <position position="1007"/>
    </location>
</feature>
<feature type="sequence conflict" description="In Ref. 1; AAC53034." evidence="7" ref="1">
    <original>EA</original>
    <variation>DG</variation>
    <location>
        <begin position="65"/>
        <end position="66"/>
    </location>
</feature>
<feature type="sequence conflict" description="In Ref. 1; AAC53034." evidence="7" ref="1">
    <original>PE</original>
    <variation>QK</variation>
    <location>
        <begin position="374"/>
        <end position="375"/>
    </location>
</feature>
<feature type="sequence conflict" description="In Ref. 1; AAC53034." evidence="7" ref="1">
    <original>T</original>
    <variation>N</variation>
    <location>
        <position position="754"/>
    </location>
</feature>
<feature type="sequence conflict" description="In Ref. 1; AAC53034." evidence="7" ref="1">
    <original>D</original>
    <variation>Y</variation>
    <location>
        <position position="800"/>
    </location>
</feature>
<feature type="sequence conflict" description="In Ref. 1; AAC53034." evidence="7" ref="1">
    <original>N</original>
    <variation>S</variation>
    <location>
        <position position="1227"/>
    </location>
</feature>
<feature type="sequence conflict" description="In Ref. 1; AAC53034." evidence="7" ref="1">
    <original>Q</original>
    <variation>R</variation>
    <location>
        <position position="1329"/>
    </location>
</feature>
<feature type="sequence conflict" description="In Ref. 1; AAC53034." evidence="7" ref="1">
    <original>E</original>
    <variation>G</variation>
    <location>
        <position position="1333"/>
    </location>
</feature>
<sequence>MSRQSTLYSFFPKSPALGDTKKAAAEASRQGAAASGASASRGGDAAWSEAEPGSRSAAVSASSPEAKDLNGGLRRASSSAQAVPPSSCDFSPGDLVWAKMEGYPWWPCLVYNHPFDGTFIRKKGKSVRVHVQFFDDSPTRGWVSKRMLKPYTGSKSKEAQKGGHFYSSKSEILRAMQRADEALSKDTAERLQLAVCDEPSEPEEEEETEVHEAYLSDKSEEDNYNESEEEAQPSVQGPRRSSRQVKKRRVISDSESDIGGSDVEFKPDTKQEGSSDDASSGVGDSDSEDLGTFGKGAPKRKRAMVAQGGLRRKSLKKETGSAKRATPILSETKSTLSAFSAPQNSESQTHVSGGGNDSSGPTVWYHETLEWLKPEKRRDEHRRRPDHPEFNPTTLYVPEEFLNSCTPGMRKWWQLKSQNFDLVIFYKVGKFYELYHMDAVIGVSELGLIFMKGNWAHSGFPEIAFGRFSDSLVQKGYKVARVEQTETPEMMEARCRKMAHVSKFDRVVRREICRIITKGTQTYSVLDGDPSENYSRYLLSLKEKEEETSGHTRVYGVCFVDTSLGKFFIGQFSDDRHCSRFRTLVAHYPPVQILFEKGNLSTETKTVLKGSLSSCLQEGLIPGSQFWDATKTLRTLLEGGYFTGNGDSSTVLPLVLKGMTSESDSVGLTPGEESELALSALGGIVFYLKKCLIDQELLSMANFEEYFPLDSDTVSTVKPGAVFTKASQRMVLDAVTLNNLEIFLNGTNGSTEGTLLERLDTCHTPFGKRLLKQWLCAPLCSPSAISDRLDAVEDLMAVPDKVTEVADLLKKLPDLERLLSKIHNVGSPLKSQNHPDSRAIMYEETTYSKKKIIDFLSALEGFKVMCKVSGLLEEVAGGFTSKTLKQVVTLQSKSPKGRFPDLTAELQRWDTAFDHEKARKTGLITPKAGFDSDYDQALADIRENEQSLLEYLDKQRSRLGCKSIVYWGIGRNRYQLEIPENFATRNLPEEYELKSTKKGCKRYWTKTIEKKLANLINAEERRDTSLKDCMRRLFCNFDKNHKDWQSAVECIAVLDVLLCLANYSQGGDGPMCRPEIVLPGEDTHPFLEFKGSRHPCITKTFFGDDFIPNDILIGCEEEAEEHGKAYCVLVTGPNMGGKSTLIRQAGLLAVMAQLGCYVPAEKCRLTPVDRVFTRLGASDRIMSGESTFFVELSETASILRHATAHSLVLVDELGRGTATFDGTAIANAVVKELAETIKCRTLFSTHYHSLVEDYSKSVCVRLGHMACMVENECEDPSQETITFLYKFIKGACPKSYGFNAARLANLPEEVIQKGHRKAREFERMNQSLQLFREVCLATEKPTINGEAIHRLLALINGL</sequence>
<reference key="1">
    <citation type="journal article" date="1996" name="Genomics">
        <title>cDNA sequence, map, and expression of the murine homolog of GTBP, a DNA mismatch repair gene.</title>
        <authorList>
            <person name="Corradi A."/>
            <person name="Croci L."/>
            <person name="Stayton C.L."/>
            <person name="Gulisano M."/>
            <person name="Boncinelli E."/>
            <person name="Consalez G.G."/>
        </authorList>
    </citation>
    <scope>NUCLEOTIDE SEQUENCE [MRNA]</scope>
</reference>
<reference key="2">
    <citation type="journal article" date="1997" name="Cell">
        <title>Mutation in the mismatch repair gene Msh6 causes cancer susceptibility.</title>
        <authorList>
            <person name="Edelmann W."/>
            <person name="Yang K."/>
            <person name="Umar A."/>
            <person name="Heyer J."/>
            <person name="Lau K."/>
            <person name="Fan K."/>
            <person name="Liedtke W."/>
            <person name="Cohen P."/>
            <person name="Kane M.K."/>
            <person name="Lipford J.R."/>
            <person name="Yu N."/>
            <person name="Crouse G.F."/>
            <person name="Pollard J.W."/>
            <person name="Kunkel T."/>
            <person name="Lipkin M."/>
            <person name="Kolodner R."/>
            <person name="Kucherlapati R."/>
        </authorList>
    </citation>
    <scope>NUCLEOTIDE SEQUENCE [GENOMIC DNA]</scope>
    <source>
        <strain>129/Ola</strain>
    </source>
</reference>
<reference key="3">
    <citation type="journal article" date="2004" name="Genome Res.">
        <title>The status, quality, and expansion of the NIH full-length cDNA project: the Mammalian Gene Collection (MGC).</title>
        <authorList>
            <consortium name="The MGC Project Team"/>
        </authorList>
    </citation>
    <scope>NUCLEOTIDE SEQUENCE [LARGE SCALE MRNA]</scope>
    <source>
        <strain>FVB/N</strain>
        <tissue>Mammary tumor</tissue>
    </source>
</reference>
<reference key="4">
    <citation type="submission" date="1996-07" db="EMBL/GenBank/DDBJ databases">
        <authorList>
            <person name="Donohue P.J."/>
            <person name="Feng S.L.Y."/>
            <person name="Alberts G.F."/>
            <person name="Guo Y."/>
            <person name="Peifley K.A."/>
            <person name="Hsu D.K.W."/>
            <person name="Winkles J.A."/>
        </authorList>
    </citation>
    <scope>NUCLEOTIDE SEQUENCE [MRNA] OF 375-425 AND 1001-1050</scope>
</reference>
<reference key="5">
    <citation type="journal article" date="2007" name="Proc. Natl. Acad. Sci. U.S.A.">
        <title>Large-scale phosphorylation analysis of mouse liver.</title>
        <authorList>
            <person name="Villen J."/>
            <person name="Beausoleil S.A."/>
            <person name="Gerber S.A."/>
            <person name="Gygi S.P."/>
        </authorList>
    </citation>
    <scope>PHOSPHORYLATION [LARGE SCALE ANALYSIS] AT SER-261</scope>
    <scope>IDENTIFICATION BY MASS SPECTROMETRY [LARGE SCALE ANALYSIS]</scope>
    <source>
        <tissue>Liver</tissue>
    </source>
</reference>
<reference key="6">
    <citation type="journal article" date="2010" name="Cell">
        <title>A tissue-specific atlas of mouse protein phosphorylation and expression.</title>
        <authorList>
            <person name="Huttlin E.L."/>
            <person name="Jedrychowski M.P."/>
            <person name="Elias J.E."/>
            <person name="Goswami T."/>
            <person name="Rad R."/>
            <person name="Beausoleil S.A."/>
            <person name="Villen J."/>
            <person name="Haas W."/>
            <person name="Sowa M.E."/>
            <person name="Gygi S.P."/>
        </authorList>
    </citation>
    <scope>PHOSPHORYLATION [LARGE SCALE ANALYSIS] AT SER-137; SER-252; SER-254; SER-256 AND SER-261</scope>
    <scope>IDENTIFICATION BY MASS SPECTROMETRY [LARGE SCALE ANALYSIS]</scope>
    <source>
        <tissue>Brain</tissue>
        <tissue>Brown adipose tissue</tissue>
        <tissue>Kidney</tissue>
        <tissue>Liver</tissue>
        <tissue>Lung</tissue>
        <tissue>Pancreas</tissue>
        <tissue>Spleen</tissue>
        <tissue>Testis</tissue>
    </source>
</reference>
<accession>P54276</accession>
<accession>O54710</accession>
<accession>Q6GTK8</accession>
<name>MSH6_MOUSE</name>
<proteinExistence type="evidence at protein level"/>
<comment type="function">
    <text evidence="1">Component of the post-replicative DNA mismatch repair system (MMR). Heterodimerizes with MSH2 to form MutS alpha, which binds to DNA mismatches thereby initiating DNA repair. When bound, MutS alpha bends the DNA helix and shields approximately 20 base pairs, and recognizes single base mismatches and dinucleotide insertion-deletion loops (IDL) in the DNA. After mismatch binding, forms a ternary complex with the MutL alpha heterodimer, which is thought to be responsible for directing the downstream MMR events, including strand discrimination, excision, and resynthesis. ATP binding and hydrolysis play a pivotal role in mismatch repair functions. The ATPase activity associated with MutS alpha regulates binding similar to a molecular switch: mismatched DNA provokes ADP--&gt;ATP exchange, resulting in a discernible conformational transition that converts MutS alpha into a sliding clamp capable of hydrolysis-independent diffusion along the DNA backbone. This transition is crucial for mismatch repair. MutS alpha may also play a role in DNA homologous recombination repair. Recruited on chromatin in G1 and early S phase via its PWWP domain that specifically binds trimethylated 'Lys-36' of histone H3 (H3K36me3): early recruitment to chromatin to be replicated allowing a quick identification of mismatch repair to initiate the DNA mismatch repair reaction (By similarity).</text>
</comment>
<comment type="subunit">
    <text evidence="1">Component of the DNA mismatch repair (MMR) complex composed at least of MSH2, MSH3, MSH6, PMS1 and MLH1. Heterodimer consisting of MSH2-MSH6 (MutS alpha). Forms a ternary complex with MutL alpha (MLH1-PMS1). Interacts with MCM9. Part of the BRCA1-associated genome surveillance complex (BASC), which contains BRCA1, MSH2, MSH6, MLH1, ATM, BLM, PMS2 and the RAD50-MRE11-NBS1 protein complex. This association could be a dynamic process changing throughout the cell cycle and within subnuclear domains.</text>
</comment>
<comment type="subcellular location">
    <subcellularLocation>
        <location evidence="1">Nucleus</location>
    </subcellularLocation>
    <subcellularLocation>
        <location evidence="1">Chromosome</location>
    </subcellularLocation>
    <text evidence="1">Associates with H3K36me3 via its PWWP domain.</text>
</comment>
<comment type="domain">
    <text evidence="1">The PWWP domain specifically recognizes and binds trimethylated 'Lys-36' of histone H3 (H3K36me3).</text>
</comment>
<comment type="PTM">
    <text evidence="1">Phosphorylated by PRKCZ, which may prevent MutS alpha degradation by the ubiquitin-proteasome pathway.</text>
</comment>
<comment type="similarity">
    <text evidence="7">Belongs to the DNA mismatch repair MutS family.</text>
</comment>
<protein>
    <recommendedName>
        <fullName evidence="6">DNA mismatch repair protein Msh6</fullName>
    </recommendedName>
    <alternativeName>
        <fullName evidence="5">G/T mismatch-binding protein</fullName>
        <shortName evidence="1">GTBP</shortName>
        <shortName evidence="5">GTMBP</shortName>
    </alternativeName>
    <alternativeName>
        <fullName evidence="1">MutS protein homolog 6</fullName>
    </alternativeName>
    <alternativeName>
        <fullName>MutS-alpha 160 kDa subunit</fullName>
        <shortName evidence="1">p160</shortName>
    </alternativeName>
</protein>
<dbReference type="EMBL" id="U42190">
    <property type="protein sequence ID" value="AAC53034.1"/>
    <property type="molecule type" value="mRNA"/>
</dbReference>
<dbReference type="EMBL" id="AF031087">
    <property type="protein sequence ID" value="AAB88445.1"/>
    <property type="molecule type" value="Genomic_DNA"/>
</dbReference>
<dbReference type="EMBL" id="AF031085">
    <property type="protein sequence ID" value="AAB88445.1"/>
    <property type="status" value="JOINED"/>
    <property type="molecule type" value="Genomic_DNA"/>
</dbReference>
<dbReference type="EMBL" id="AF031086">
    <property type="protein sequence ID" value="AAB88445.1"/>
    <property type="status" value="JOINED"/>
    <property type="molecule type" value="Genomic_DNA"/>
</dbReference>
<dbReference type="EMBL" id="BC051160">
    <property type="protein sequence ID" value="AAH51160.1"/>
    <property type="molecule type" value="mRNA"/>
</dbReference>
<dbReference type="EMBL" id="BC051634">
    <property type="protein sequence ID" value="AAH51634.1"/>
    <property type="molecule type" value="mRNA"/>
</dbReference>
<dbReference type="EMBL" id="U61388">
    <property type="protein sequence ID" value="AAB39930.1"/>
    <property type="molecule type" value="mRNA"/>
</dbReference>
<dbReference type="EMBL" id="U61389">
    <property type="protein sequence ID" value="AAB39931.1"/>
    <property type="molecule type" value="mRNA"/>
</dbReference>
<dbReference type="CCDS" id="CCDS29021.1"/>
<dbReference type="RefSeq" id="NP_034960.1">
    <property type="nucleotide sequence ID" value="NM_010830.2"/>
</dbReference>
<dbReference type="SMR" id="P54276"/>
<dbReference type="BioGRID" id="201528">
    <property type="interactions" value="20"/>
</dbReference>
<dbReference type="ComplexPortal" id="CPX-81">
    <property type="entry name" value="DNA mismatch repair MutSalpha complex"/>
</dbReference>
<dbReference type="CORUM" id="P54276"/>
<dbReference type="FunCoup" id="P54276">
    <property type="interactions" value="4444"/>
</dbReference>
<dbReference type="IntAct" id="P54276">
    <property type="interactions" value="5"/>
</dbReference>
<dbReference type="MINT" id="P54276"/>
<dbReference type="STRING" id="10090.ENSMUSP00000005503"/>
<dbReference type="GlyGen" id="P54276">
    <property type="glycosylation" value="5 sites, 2 N-linked glycans (2 sites), 1 O-linked glycan (2 sites)"/>
</dbReference>
<dbReference type="iPTMnet" id="P54276"/>
<dbReference type="PhosphoSitePlus" id="P54276"/>
<dbReference type="SwissPalm" id="P54276"/>
<dbReference type="jPOST" id="P54276"/>
<dbReference type="PaxDb" id="10090-ENSMUSP00000005503"/>
<dbReference type="PeptideAtlas" id="P54276"/>
<dbReference type="ProteomicsDB" id="290100"/>
<dbReference type="Pumba" id="P54276"/>
<dbReference type="Antibodypedia" id="3963">
    <property type="antibodies" value="877 antibodies from 45 providers"/>
</dbReference>
<dbReference type="DNASU" id="17688"/>
<dbReference type="Ensembl" id="ENSMUST00000005503.5">
    <property type="protein sequence ID" value="ENSMUSP00000005503.4"/>
    <property type="gene ID" value="ENSMUSG00000005370.5"/>
</dbReference>
<dbReference type="GeneID" id="17688"/>
<dbReference type="KEGG" id="mmu:17688"/>
<dbReference type="UCSC" id="uc008dvd.2">
    <property type="organism name" value="mouse"/>
</dbReference>
<dbReference type="AGR" id="MGI:1343961"/>
<dbReference type="CTD" id="2956"/>
<dbReference type="MGI" id="MGI:1343961">
    <property type="gene designation" value="Msh6"/>
</dbReference>
<dbReference type="VEuPathDB" id="HostDB:ENSMUSG00000005370"/>
<dbReference type="eggNOG" id="KOG0217">
    <property type="taxonomic scope" value="Eukaryota"/>
</dbReference>
<dbReference type="GeneTree" id="ENSGT00550000075024"/>
<dbReference type="HOGENOM" id="CLU_002472_1_3_1"/>
<dbReference type="InParanoid" id="P54276"/>
<dbReference type="OMA" id="TPMMAQY"/>
<dbReference type="OrthoDB" id="10252754at2759"/>
<dbReference type="PhylomeDB" id="P54276"/>
<dbReference type="TreeFam" id="TF105842"/>
<dbReference type="Reactome" id="R-MMU-5358565">
    <property type="pathway name" value="Mismatch repair (MMR) directed by MSH2:MSH6 (MutSalpha)"/>
</dbReference>
<dbReference type="BioGRID-ORCS" id="17688">
    <property type="hits" value="1 hit in 120 CRISPR screens"/>
</dbReference>
<dbReference type="ChiTaRS" id="Msh6">
    <property type="organism name" value="mouse"/>
</dbReference>
<dbReference type="PRO" id="PR:P54276"/>
<dbReference type="Proteomes" id="UP000000589">
    <property type="component" value="Chromosome 17"/>
</dbReference>
<dbReference type="RNAct" id="P54276">
    <property type="molecule type" value="protein"/>
</dbReference>
<dbReference type="Bgee" id="ENSMUSG00000005370">
    <property type="expression patterns" value="Expressed in animal zygote and 252 other cell types or tissues"/>
</dbReference>
<dbReference type="ExpressionAtlas" id="P54276">
    <property type="expression patterns" value="baseline and differential"/>
</dbReference>
<dbReference type="GO" id="GO:0000785">
    <property type="term" value="C:chromatin"/>
    <property type="evidence" value="ECO:0000314"/>
    <property type="project" value="MGI"/>
</dbReference>
<dbReference type="GO" id="GO:0005829">
    <property type="term" value="C:cytosol"/>
    <property type="evidence" value="ECO:0007669"/>
    <property type="project" value="Ensembl"/>
</dbReference>
<dbReference type="GO" id="GO:0005794">
    <property type="term" value="C:Golgi apparatus"/>
    <property type="evidence" value="ECO:0007669"/>
    <property type="project" value="Ensembl"/>
</dbReference>
<dbReference type="GO" id="GO:0032301">
    <property type="term" value="C:MutSalpha complex"/>
    <property type="evidence" value="ECO:0000314"/>
    <property type="project" value="MGI"/>
</dbReference>
<dbReference type="GO" id="GO:0005654">
    <property type="term" value="C:nucleoplasm"/>
    <property type="evidence" value="ECO:0007669"/>
    <property type="project" value="Ensembl"/>
</dbReference>
<dbReference type="GO" id="GO:0043531">
    <property type="term" value="F:ADP binding"/>
    <property type="evidence" value="ECO:0007669"/>
    <property type="project" value="Ensembl"/>
</dbReference>
<dbReference type="GO" id="GO:0005524">
    <property type="term" value="F:ATP binding"/>
    <property type="evidence" value="ECO:0007669"/>
    <property type="project" value="UniProtKB-KW"/>
</dbReference>
<dbReference type="GO" id="GO:0140664">
    <property type="term" value="F:ATP-dependent DNA damage sensor activity"/>
    <property type="evidence" value="ECO:0007669"/>
    <property type="project" value="InterPro"/>
</dbReference>
<dbReference type="GO" id="GO:0003682">
    <property type="term" value="F:chromatin binding"/>
    <property type="evidence" value="ECO:0000314"/>
    <property type="project" value="MGI"/>
</dbReference>
<dbReference type="GO" id="GO:0003684">
    <property type="term" value="F:damaged DNA binding"/>
    <property type="evidence" value="ECO:0000315"/>
    <property type="project" value="MGI"/>
</dbReference>
<dbReference type="GO" id="GO:0003677">
    <property type="term" value="F:DNA binding"/>
    <property type="evidence" value="ECO:0000315"/>
    <property type="project" value="MGI"/>
</dbReference>
<dbReference type="GO" id="GO:0019899">
    <property type="term" value="F:enzyme binding"/>
    <property type="evidence" value="ECO:0007669"/>
    <property type="project" value="Ensembl"/>
</dbReference>
<dbReference type="GO" id="GO:0000400">
    <property type="term" value="F:four-way junction DNA binding"/>
    <property type="evidence" value="ECO:0007669"/>
    <property type="project" value="Ensembl"/>
</dbReference>
<dbReference type="GO" id="GO:0032137">
    <property type="term" value="F:guanine/thymine mispair binding"/>
    <property type="evidence" value="ECO:0000314"/>
    <property type="project" value="MGI"/>
</dbReference>
<dbReference type="GO" id="GO:0140003">
    <property type="term" value="F:histone H3K36me3 reader activity"/>
    <property type="evidence" value="ECO:0000250"/>
    <property type="project" value="UniProtKB"/>
</dbReference>
<dbReference type="GO" id="GO:0000287">
    <property type="term" value="F:magnesium ion binding"/>
    <property type="evidence" value="ECO:0007669"/>
    <property type="project" value="Ensembl"/>
</dbReference>
<dbReference type="GO" id="GO:0030983">
    <property type="term" value="F:mismatched DNA binding"/>
    <property type="evidence" value="ECO:0000250"/>
    <property type="project" value="UniProtKB"/>
</dbReference>
<dbReference type="GO" id="GO:0032405">
    <property type="term" value="F:MutLalpha complex binding"/>
    <property type="evidence" value="ECO:0007669"/>
    <property type="project" value="Ensembl"/>
</dbReference>
<dbReference type="GO" id="GO:0032357">
    <property type="term" value="F:oxidized purine DNA binding"/>
    <property type="evidence" value="ECO:0007669"/>
    <property type="project" value="Ensembl"/>
</dbReference>
<dbReference type="GO" id="GO:0032142">
    <property type="term" value="F:single guanine insertion binding"/>
    <property type="evidence" value="ECO:0007669"/>
    <property type="project" value="Ensembl"/>
</dbReference>
<dbReference type="GO" id="GO:0032143">
    <property type="term" value="F:single thymine insertion binding"/>
    <property type="evidence" value="ECO:0007669"/>
    <property type="project" value="Ensembl"/>
</dbReference>
<dbReference type="GO" id="GO:0008340">
    <property type="term" value="P:determination of adult lifespan"/>
    <property type="evidence" value="ECO:0000315"/>
    <property type="project" value="MGI"/>
</dbReference>
<dbReference type="GO" id="GO:0097193">
    <property type="term" value="P:intrinsic apoptotic signaling pathway"/>
    <property type="evidence" value="ECO:0000315"/>
    <property type="project" value="MGI"/>
</dbReference>
<dbReference type="GO" id="GO:0008630">
    <property type="term" value="P:intrinsic apoptotic signaling pathway in response to DNA damage"/>
    <property type="evidence" value="ECO:0000315"/>
    <property type="project" value="MGI"/>
</dbReference>
<dbReference type="GO" id="GO:0045190">
    <property type="term" value="P:isotype switching"/>
    <property type="evidence" value="ECO:0000315"/>
    <property type="project" value="MGI"/>
</dbReference>
<dbReference type="GO" id="GO:0006298">
    <property type="term" value="P:mismatch repair"/>
    <property type="evidence" value="ECO:0000315"/>
    <property type="project" value="MGI"/>
</dbReference>
<dbReference type="GO" id="GO:0045910">
    <property type="term" value="P:negative regulation of DNA recombination"/>
    <property type="evidence" value="ECO:0000315"/>
    <property type="project" value="MGI"/>
</dbReference>
<dbReference type="GO" id="GO:0009411">
    <property type="term" value="P:response to UV"/>
    <property type="evidence" value="ECO:0000315"/>
    <property type="project" value="MGI"/>
</dbReference>
<dbReference type="GO" id="GO:0016446">
    <property type="term" value="P:somatic hypermutation of immunoglobulin genes"/>
    <property type="evidence" value="ECO:0000315"/>
    <property type="project" value="MGI"/>
</dbReference>
<dbReference type="GO" id="GO:0016447">
    <property type="term" value="P:somatic recombination of immunoglobulin gene segments"/>
    <property type="evidence" value="ECO:0000315"/>
    <property type="project" value="MGI"/>
</dbReference>
<dbReference type="GO" id="GO:0007283">
    <property type="term" value="P:spermatogenesis"/>
    <property type="evidence" value="ECO:0007669"/>
    <property type="project" value="Ensembl"/>
</dbReference>
<dbReference type="CDD" id="cd05837">
    <property type="entry name" value="PWWP_MSH6"/>
    <property type="match status" value="1"/>
</dbReference>
<dbReference type="FunFam" id="1.10.1420.10:FF:000005">
    <property type="entry name" value="DNA mismatch repair protein"/>
    <property type="match status" value="1"/>
</dbReference>
<dbReference type="FunFam" id="1.10.1420.10:FF:000006">
    <property type="entry name" value="DNA mismatch repair protein"/>
    <property type="match status" value="1"/>
</dbReference>
<dbReference type="FunFam" id="2.30.30.140:FF:000069">
    <property type="entry name" value="DNA mismatch repair protein"/>
    <property type="match status" value="1"/>
</dbReference>
<dbReference type="FunFam" id="3.30.420.110:FF:000004">
    <property type="entry name" value="DNA mismatch repair protein"/>
    <property type="match status" value="1"/>
</dbReference>
<dbReference type="FunFam" id="3.40.1170.10:FF:000002">
    <property type="entry name" value="DNA mismatch repair protein"/>
    <property type="match status" value="1"/>
</dbReference>
<dbReference type="FunFam" id="3.40.50.300:FF:000645">
    <property type="entry name" value="DNA mismatch repair protein"/>
    <property type="match status" value="1"/>
</dbReference>
<dbReference type="Gene3D" id="1.10.1420.10">
    <property type="match status" value="2"/>
</dbReference>
<dbReference type="Gene3D" id="2.30.30.140">
    <property type="match status" value="1"/>
</dbReference>
<dbReference type="Gene3D" id="3.40.1170.10">
    <property type="entry name" value="DNA repair protein MutS, domain I"/>
    <property type="match status" value="1"/>
</dbReference>
<dbReference type="Gene3D" id="3.30.420.110">
    <property type="entry name" value="MutS, connector domain"/>
    <property type="match status" value="1"/>
</dbReference>
<dbReference type="Gene3D" id="3.40.50.300">
    <property type="entry name" value="P-loop containing nucleotide triphosphate hydrolases"/>
    <property type="match status" value="1"/>
</dbReference>
<dbReference type="InterPro" id="IPR007695">
    <property type="entry name" value="DNA_mismatch_repair_MutS-lik_N"/>
</dbReference>
<dbReference type="InterPro" id="IPR017261">
    <property type="entry name" value="DNA_mismatch_repair_MutS/MSH"/>
</dbReference>
<dbReference type="InterPro" id="IPR000432">
    <property type="entry name" value="DNA_mismatch_repair_MutS_C"/>
</dbReference>
<dbReference type="InterPro" id="IPR007861">
    <property type="entry name" value="DNA_mismatch_repair_MutS_clamp"/>
</dbReference>
<dbReference type="InterPro" id="IPR007696">
    <property type="entry name" value="DNA_mismatch_repair_MutS_core"/>
</dbReference>
<dbReference type="InterPro" id="IPR016151">
    <property type="entry name" value="DNA_mismatch_repair_MutS_N"/>
</dbReference>
<dbReference type="InterPro" id="IPR036187">
    <property type="entry name" value="DNA_mismatch_repair_MutS_sf"/>
</dbReference>
<dbReference type="InterPro" id="IPR007860">
    <property type="entry name" value="DNA_mmatch_repair_MutS_con_dom"/>
</dbReference>
<dbReference type="InterPro" id="IPR045076">
    <property type="entry name" value="MutS"/>
</dbReference>
<dbReference type="InterPro" id="IPR036678">
    <property type="entry name" value="MutS_con_dom_sf"/>
</dbReference>
<dbReference type="InterPro" id="IPR027417">
    <property type="entry name" value="P-loop_NTPase"/>
</dbReference>
<dbReference type="InterPro" id="IPR000313">
    <property type="entry name" value="PWWP_dom"/>
</dbReference>
<dbReference type="NCBIfam" id="NF003810">
    <property type="entry name" value="PRK05399.1"/>
    <property type="match status" value="1"/>
</dbReference>
<dbReference type="PANTHER" id="PTHR11361:SF148">
    <property type="entry name" value="DNA MISMATCH REPAIR PROTEIN MSH6"/>
    <property type="match status" value="1"/>
</dbReference>
<dbReference type="PANTHER" id="PTHR11361">
    <property type="entry name" value="DNA MISMATCH REPAIR PROTEIN MUTS FAMILY MEMBER"/>
    <property type="match status" value="1"/>
</dbReference>
<dbReference type="Pfam" id="PF01624">
    <property type="entry name" value="MutS_I"/>
    <property type="match status" value="1"/>
</dbReference>
<dbReference type="Pfam" id="PF05188">
    <property type="entry name" value="MutS_II"/>
    <property type="match status" value="1"/>
</dbReference>
<dbReference type="Pfam" id="PF05192">
    <property type="entry name" value="MutS_III"/>
    <property type="match status" value="1"/>
</dbReference>
<dbReference type="Pfam" id="PF05190">
    <property type="entry name" value="MutS_IV"/>
    <property type="match status" value="1"/>
</dbReference>
<dbReference type="Pfam" id="PF00488">
    <property type="entry name" value="MutS_V"/>
    <property type="match status" value="1"/>
</dbReference>
<dbReference type="Pfam" id="PF00855">
    <property type="entry name" value="PWWP"/>
    <property type="match status" value="1"/>
</dbReference>
<dbReference type="PIRSF" id="PIRSF037677">
    <property type="entry name" value="DNA_mis_repair_Msh6"/>
    <property type="match status" value="1"/>
</dbReference>
<dbReference type="SMART" id="SM00534">
    <property type="entry name" value="MUTSac"/>
    <property type="match status" value="1"/>
</dbReference>
<dbReference type="SMART" id="SM00533">
    <property type="entry name" value="MUTSd"/>
    <property type="match status" value="1"/>
</dbReference>
<dbReference type="SMART" id="SM00293">
    <property type="entry name" value="PWWP"/>
    <property type="match status" value="1"/>
</dbReference>
<dbReference type="SUPFAM" id="SSF55271">
    <property type="entry name" value="DNA repair protein MutS, domain I"/>
    <property type="match status" value="1"/>
</dbReference>
<dbReference type="SUPFAM" id="SSF48334">
    <property type="entry name" value="DNA repair protein MutS, domain III"/>
    <property type="match status" value="1"/>
</dbReference>
<dbReference type="SUPFAM" id="SSF52540">
    <property type="entry name" value="P-loop containing nucleoside triphosphate hydrolases"/>
    <property type="match status" value="1"/>
</dbReference>
<dbReference type="SUPFAM" id="SSF63748">
    <property type="entry name" value="Tudor/PWWP/MBT"/>
    <property type="match status" value="1"/>
</dbReference>
<dbReference type="PROSITE" id="PS00486">
    <property type="entry name" value="DNA_MISMATCH_REPAIR_2"/>
    <property type="match status" value="1"/>
</dbReference>
<dbReference type="PROSITE" id="PS50812">
    <property type="entry name" value="PWWP"/>
    <property type="match status" value="1"/>
</dbReference>
<gene>
    <name evidence="8" type="primary">Msh6</name>
    <name type="synonym">Gtmbp</name>
</gene>
<keyword id="KW-0007">Acetylation</keyword>
<keyword id="KW-0067">ATP-binding</keyword>
<keyword id="KW-0158">Chromosome</keyword>
<keyword id="KW-0227">DNA damage</keyword>
<keyword id="KW-0234">DNA repair</keyword>
<keyword id="KW-0238">DNA-binding</keyword>
<keyword id="KW-0547">Nucleotide-binding</keyword>
<keyword id="KW-0539">Nucleus</keyword>
<keyword id="KW-0597">Phosphoprotein</keyword>
<keyword id="KW-1185">Reference proteome</keyword>
<organism>
    <name type="scientific">Mus musculus</name>
    <name type="common">Mouse</name>
    <dbReference type="NCBI Taxonomy" id="10090"/>
    <lineage>
        <taxon>Eukaryota</taxon>
        <taxon>Metazoa</taxon>
        <taxon>Chordata</taxon>
        <taxon>Craniata</taxon>
        <taxon>Vertebrata</taxon>
        <taxon>Euteleostomi</taxon>
        <taxon>Mammalia</taxon>
        <taxon>Eutheria</taxon>
        <taxon>Euarchontoglires</taxon>
        <taxon>Glires</taxon>
        <taxon>Rodentia</taxon>
        <taxon>Myomorpha</taxon>
        <taxon>Muroidea</taxon>
        <taxon>Muridae</taxon>
        <taxon>Murinae</taxon>
        <taxon>Mus</taxon>
        <taxon>Mus</taxon>
    </lineage>
</organism>
<evidence type="ECO:0000250" key="1">
    <source>
        <dbReference type="UniProtKB" id="P52701"/>
    </source>
</evidence>
<evidence type="ECO:0000255" key="2"/>
<evidence type="ECO:0000255" key="3">
    <source>
        <dbReference type="PROSITE-ProRule" id="PRU00162"/>
    </source>
</evidence>
<evidence type="ECO:0000256" key="4">
    <source>
        <dbReference type="SAM" id="MobiDB-lite"/>
    </source>
</evidence>
<evidence type="ECO:0000303" key="5">
    <source>
    </source>
</evidence>
<evidence type="ECO:0000303" key="6">
    <source>
    </source>
</evidence>
<evidence type="ECO:0000305" key="7"/>
<evidence type="ECO:0000312" key="8">
    <source>
        <dbReference type="MGI" id="MGI:1343961"/>
    </source>
</evidence>
<evidence type="ECO:0007744" key="9">
    <source>
    </source>
</evidence>
<evidence type="ECO:0007744" key="10">
    <source>
    </source>
</evidence>